<keyword id="KW-1185">Reference proteome</keyword>
<organism>
    <name type="scientific">Eremothecium gossypii (strain ATCC 10895 / CBS 109.51 / FGSC 9923 / NRRL Y-1056)</name>
    <name type="common">Yeast</name>
    <name type="synonym">Ashbya gossypii</name>
    <dbReference type="NCBI Taxonomy" id="284811"/>
    <lineage>
        <taxon>Eukaryota</taxon>
        <taxon>Fungi</taxon>
        <taxon>Dikarya</taxon>
        <taxon>Ascomycota</taxon>
        <taxon>Saccharomycotina</taxon>
        <taxon>Saccharomycetes</taxon>
        <taxon>Saccharomycetales</taxon>
        <taxon>Saccharomycetaceae</taxon>
        <taxon>Eremothecium</taxon>
    </lineage>
</organism>
<evidence type="ECO:0000305" key="1"/>
<comment type="similarity">
    <text evidence="1">Belongs to the UPF0045 family.</text>
</comment>
<accession>Q8J1F7</accession>
<protein>
    <recommendedName>
        <fullName>UPF0045 protein ECM15</fullName>
    </recommendedName>
</protein>
<reference key="1">
    <citation type="submission" date="2001-05" db="EMBL/GenBank/DDBJ databases">
        <title>Isolation and functional analysis of centromeric DNA of the filamentous ascomycete Ashbya gossypii.</title>
        <authorList>
            <person name="Wendland J."/>
            <person name="Dietrich F.S."/>
            <person name="Mohr C."/>
            <person name="Philippsen P."/>
        </authorList>
    </citation>
    <scope>NUCLEOTIDE SEQUENCE [GENOMIC DNA]</scope>
    <source>
        <strain>ATCC 10895 / CBS 109.51 / FGSC 9923 / NRRL Y-1056</strain>
    </source>
</reference>
<reference key="2">
    <citation type="journal article" date="2004" name="Science">
        <title>The Ashbya gossypii genome as a tool for mapping the ancient Saccharomyces cerevisiae genome.</title>
        <authorList>
            <person name="Dietrich F.S."/>
            <person name="Voegeli S."/>
            <person name="Brachat S."/>
            <person name="Lerch A."/>
            <person name="Gates K."/>
            <person name="Steiner S."/>
            <person name="Mohr C."/>
            <person name="Poehlmann R."/>
            <person name="Luedi P."/>
            <person name="Choi S."/>
            <person name="Wing R.A."/>
            <person name="Flavier A."/>
            <person name="Gaffney T.D."/>
            <person name="Philippsen P."/>
        </authorList>
    </citation>
    <scope>NUCLEOTIDE SEQUENCE [LARGE SCALE GENOMIC DNA]</scope>
    <source>
        <strain>ATCC 10895 / CBS 109.51 / FGSC 9923 / NRRL Y-1056</strain>
    </source>
</reference>
<reference key="3">
    <citation type="journal article" date="2013" name="G3 (Bethesda)">
        <title>Genomes of Ashbya fungi isolated from insects reveal four mating-type loci, numerous translocations, lack of transposons, and distinct gene duplications.</title>
        <authorList>
            <person name="Dietrich F.S."/>
            <person name="Voegeli S."/>
            <person name="Kuo S."/>
            <person name="Philippsen P."/>
        </authorList>
    </citation>
    <scope>GENOME REANNOTATION</scope>
    <source>
        <strain>ATCC 10895 / CBS 109.51 / FGSC 9923 / NRRL Y-1056</strain>
    </source>
</reference>
<sequence length="105" mass="12007">MSKLHTLVDICMVPLGTSSPSVSDYVTKIEKRIRESHLKSTMHSFGTTIEGPWDEVMSLIGQLHEYSHELGYVRIHTEMRLGTRTDKQQTAQDKVDVVEKKLSDY</sequence>
<feature type="chain" id="PRO_0000147620" description="UPF0045 protein ECM15">
    <location>
        <begin position="1"/>
        <end position="105"/>
    </location>
</feature>
<name>ECM15_EREGS</name>
<gene>
    <name type="primary">ECM15</name>
    <name type="ordered locus">AEL001C</name>
</gene>
<proteinExistence type="inferred from homology"/>
<dbReference type="EMBL" id="AF384989">
    <property type="protein sequence ID" value="AAO15412.1"/>
    <property type="molecule type" value="Genomic_DNA"/>
</dbReference>
<dbReference type="EMBL" id="AE016818">
    <property type="protein sequence ID" value="AAS52684.1"/>
    <property type="molecule type" value="Genomic_DNA"/>
</dbReference>
<dbReference type="RefSeq" id="NP_984860.1">
    <property type="nucleotide sequence ID" value="NM_210214.1"/>
</dbReference>
<dbReference type="SMR" id="Q8J1F7"/>
<dbReference type="FunCoup" id="Q8J1F7">
    <property type="interactions" value="40"/>
</dbReference>
<dbReference type="EnsemblFungi" id="AAS52684">
    <property type="protein sequence ID" value="AAS52684"/>
    <property type="gene ID" value="AGOS_AEL001C"/>
</dbReference>
<dbReference type="GeneID" id="4621059"/>
<dbReference type="KEGG" id="ago:AGOS_AEL001C"/>
<dbReference type="eggNOG" id="ENOG502S45I">
    <property type="taxonomic scope" value="Eukaryota"/>
</dbReference>
<dbReference type="HOGENOM" id="CLU_137479_0_2_1"/>
<dbReference type="InParanoid" id="Q8J1F7"/>
<dbReference type="OMA" id="KYKMHGY"/>
<dbReference type="OrthoDB" id="5587367at2759"/>
<dbReference type="Proteomes" id="UP000000591">
    <property type="component" value="Chromosome V"/>
</dbReference>
<dbReference type="Gene3D" id="3.30.70.930">
    <property type="match status" value="1"/>
</dbReference>
<dbReference type="InterPro" id="IPR029756">
    <property type="entry name" value="MTH1187/YkoF-like"/>
</dbReference>
<dbReference type="InterPro" id="IPR002767">
    <property type="entry name" value="Thiamine_BP"/>
</dbReference>
<dbReference type="InterPro" id="IPR051614">
    <property type="entry name" value="UPF0045_domain"/>
</dbReference>
<dbReference type="NCBIfam" id="TIGR00106">
    <property type="entry name" value="MTH1187 family thiamine-binding protein"/>
    <property type="match status" value="1"/>
</dbReference>
<dbReference type="PANTHER" id="PTHR33777">
    <property type="entry name" value="UPF0045 PROTEIN ECM15"/>
    <property type="match status" value="1"/>
</dbReference>
<dbReference type="PANTHER" id="PTHR33777:SF1">
    <property type="entry name" value="UPF0045 PROTEIN ECM15"/>
    <property type="match status" value="1"/>
</dbReference>
<dbReference type="Pfam" id="PF01910">
    <property type="entry name" value="Thiamine_BP"/>
    <property type="match status" value="1"/>
</dbReference>
<dbReference type="SUPFAM" id="SSF89957">
    <property type="entry name" value="MTH1187/YkoF-like"/>
    <property type="match status" value="1"/>
</dbReference>